<reference key="1">
    <citation type="journal article" date="2001" name="Genome Res.">
        <title>The complete genome sequence of the lactic acid bacterium Lactococcus lactis ssp. lactis IL1403.</title>
        <authorList>
            <person name="Bolotin A."/>
            <person name="Wincker P."/>
            <person name="Mauger S."/>
            <person name="Jaillon O."/>
            <person name="Malarme K."/>
            <person name="Weissenbach J."/>
            <person name="Ehrlich S.D."/>
            <person name="Sorokin A."/>
        </authorList>
    </citation>
    <scope>NUCLEOTIDE SEQUENCE [LARGE SCALE GENOMIC DNA]</scope>
    <source>
        <strain>IL1403</strain>
    </source>
</reference>
<protein>
    <recommendedName>
        <fullName evidence="1">ADP-dependent (S)-NAD(P)H-hydrate dehydratase</fullName>
        <ecNumber evidence="1">4.2.1.136</ecNumber>
    </recommendedName>
    <alternativeName>
        <fullName evidence="1">ADP-dependent NAD(P)HX dehydratase</fullName>
    </alternativeName>
</protein>
<dbReference type="EC" id="4.2.1.136" evidence="1"/>
<dbReference type="EMBL" id="AE005176">
    <property type="protein sequence ID" value="AAK04357.1"/>
    <property type="molecule type" value="Genomic_DNA"/>
</dbReference>
<dbReference type="PIR" id="C86657">
    <property type="entry name" value="C86657"/>
</dbReference>
<dbReference type="RefSeq" id="NP_266415.1">
    <property type="nucleotide sequence ID" value="NC_002662.1"/>
</dbReference>
<dbReference type="RefSeq" id="WP_010905246.1">
    <property type="nucleotide sequence ID" value="NC_002662.1"/>
</dbReference>
<dbReference type="SMR" id="Q9CIU7"/>
<dbReference type="PaxDb" id="272623-L57608"/>
<dbReference type="EnsemblBacteria" id="AAK04357">
    <property type="protein sequence ID" value="AAK04357"/>
    <property type="gene ID" value="L57608"/>
</dbReference>
<dbReference type="KEGG" id="lla:L57608"/>
<dbReference type="PATRIC" id="fig|272623.7.peg.284"/>
<dbReference type="eggNOG" id="COG0063">
    <property type="taxonomic scope" value="Bacteria"/>
</dbReference>
<dbReference type="HOGENOM" id="CLU_024853_2_1_9"/>
<dbReference type="OrthoDB" id="9806925at2"/>
<dbReference type="Proteomes" id="UP000002196">
    <property type="component" value="Chromosome"/>
</dbReference>
<dbReference type="GO" id="GO:0052855">
    <property type="term" value="F:ADP-dependent NAD(P)H-hydrate dehydratase activity"/>
    <property type="evidence" value="ECO:0007669"/>
    <property type="project" value="UniProtKB-UniRule"/>
</dbReference>
<dbReference type="GO" id="GO:0005524">
    <property type="term" value="F:ATP binding"/>
    <property type="evidence" value="ECO:0007669"/>
    <property type="project" value="UniProtKB-KW"/>
</dbReference>
<dbReference type="GO" id="GO:0052856">
    <property type="term" value="F:NAD(P)HX epimerase activity"/>
    <property type="evidence" value="ECO:0007669"/>
    <property type="project" value="TreeGrafter"/>
</dbReference>
<dbReference type="GO" id="GO:0110051">
    <property type="term" value="P:metabolite repair"/>
    <property type="evidence" value="ECO:0007669"/>
    <property type="project" value="TreeGrafter"/>
</dbReference>
<dbReference type="GO" id="GO:0046496">
    <property type="term" value="P:nicotinamide nucleotide metabolic process"/>
    <property type="evidence" value="ECO:0007669"/>
    <property type="project" value="UniProtKB-UniRule"/>
</dbReference>
<dbReference type="CDD" id="cd01171">
    <property type="entry name" value="YXKO-related"/>
    <property type="match status" value="1"/>
</dbReference>
<dbReference type="Gene3D" id="3.40.1190.20">
    <property type="match status" value="1"/>
</dbReference>
<dbReference type="HAMAP" id="MF_01965">
    <property type="entry name" value="NADHX_dehydratase"/>
    <property type="match status" value="1"/>
</dbReference>
<dbReference type="InterPro" id="IPR017953">
    <property type="entry name" value="Carbohydrate_kinase_pred_CS"/>
</dbReference>
<dbReference type="InterPro" id="IPR000631">
    <property type="entry name" value="CARKD"/>
</dbReference>
<dbReference type="InterPro" id="IPR029056">
    <property type="entry name" value="Ribokinase-like"/>
</dbReference>
<dbReference type="NCBIfam" id="TIGR00196">
    <property type="entry name" value="yjeF_cterm"/>
    <property type="match status" value="1"/>
</dbReference>
<dbReference type="PANTHER" id="PTHR12592:SF0">
    <property type="entry name" value="ATP-DEPENDENT (S)-NAD(P)H-HYDRATE DEHYDRATASE"/>
    <property type="match status" value="1"/>
</dbReference>
<dbReference type="PANTHER" id="PTHR12592">
    <property type="entry name" value="ATP-DEPENDENT (S)-NAD(P)H-HYDRATE DEHYDRATASE FAMILY MEMBER"/>
    <property type="match status" value="1"/>
</dbReference>
<dbReference type="Pfam" id="PF01256">
    <property type="entry name" value="Carb_kinase"/>
    <property type="match status" value="1"/>
</dbReference>
<dbReference type="SUPFAM" id="SSF53613">
    <property type="entry name" value="Ribokinase-like"/>
    <property type="match status" value="1"/>
</dbReference>
<dbReference type="PROSITE" id="PS01049">
    <property type="entry name" value="YJEF_C_1"/>
    <property type="match status" value="1"/>
</dbReference>
<dbReference type="PROSITE" id="PS01050">
    <property type="entry name" value="YJEF_C_2"/>
    <property type="match status" value="1"/>
</dbReference>
<dbReference type="PROSITE" id="PS51383">
    <property type="entry name" value="YJEF_C_3"/>
    <property type="match status" value="1"/>
</dbReference>
<accession>Q9CIU7</accession>
<organism>
    <name type="scientific">Lactococcus lactis subsp. lactis (strain IL1403)</name>
    <name type="common">Streptococcus lactis</name>
    <dbReference type="NCBI Taxonomy" id="272623"/>
    <lineage>
        <taxon>Bacteria</taxon>
        <taxon>Bacillati</taxon>
        <taxon>Bacillota</taxon>
        <taxon>Bacilli</taxon>
        <taxon>Lactobacillales</taxon>
        <taxon>Streptococcaceae</taxon>
        <taxon>Lactococcus</taxon>
    </lineage>
</organism>
<sequence length="275" mass="29853">MIELTDEILAKVIKKRKKASYKGTYGRLLVIGGNRQYGGAAILVTTSAVYSGAGLVSVALAKENHSALQARLPEAMTLDFDDLIKLREVAKAADVIVIGPGLGLERLDLLTEVLNLLTENQKLVIDGSALTLFAREHLDLPFPENTVFTPHEMELERLSGLKIGQQTKEEVQDFVNQLGAIVVAKSSETRIFAPNRESFILKIGSPAQATGGMGDTLAGMVGGFLAQFHGETEEVVAAATYLHSLIASVLARKTYVVLPSRLIEEIPLFMKKYEC</sequence>
<feature type="chain" id="PRO_0000416144" description="ADP-dependent (S)-NAD(P)H-hydrate dehydratase">
    <location>
        <begin position="1"/>
        <end position="275"/>
    </location>
</feature>
<feature type="domain" description="YjeF C-terminal" evidence="1">
    <location>
        <begin position="5"/>
        <end position="273"/>
    </location>
</feature>
<feature type="binding site" evidence="1">
    <location>
        <position position="40"/>
    </location>
    <ligand>
        <name>(6S)-NADPHX</name>
        <dbReference type="ChEBI" id="CHEBI:64076"/>
    </ligand>
</feature>
<feature type="binding site" evidence="1">
    <location>
        <position position="103"/>
    </location>
    <ligand>
        <name>(6S)-NADPHX</name>
        <dbReference type="ChEBI" id="CHEBI:64076"/>
    </ligand>
</feature>
<feature type="binding site" evidence="1">
    <location>
        <position position="151"/>
    </location>
    <ligand>
        <name>(6S)-NADPHX</name>
        <dbReference type="ChEBI" id="CHEBI:64076"/>
    </ligand>
</feature>
<feature type="binding site" evidence="1">
    <location>
        <position position="214"/>
    </location>
    <ligand>
        <name>AMP</name>
        <dbReference type="ChEBI" id="CHEBI:456215"/>
    </ligand>
</feature>
<feature type="binding site" evidence="1">
    <location>
        <position position="215"/>
    </location>
    <ligand>
        <name>(6S)-NADPHX</name>
        <dbReference type="ChEBI" id="CHEBI:64076"/>
    </ligand>
</feature>
<proteinExistence type="inferred from homology"/>
<comment type="function">
    <text evidence="1">Catalyzes the dehydration of the S-form of NAD(P)HX at the expense of ADP, which is converted to AMP. Together with NAD(P)HX epimerase, which catalyzes the epimerization of the S- and R-forms, the enzyme allows the repair of both epimers of NAD(P)HX, a damaged form of NAD(P)H that is a result of enzymatic or heat-dependent hydration.</text>
</comment>
<comment type="catalytic activity">
    <reaction evidence="1">
        <text>(6S)-NADHX + ADP = AMP + phosphate + NADH + H(+)</text>
        <dbReference type="Rhea" id="RHEA:32223"/>
        <dbReference type="ChEBI" id="CHEBI:15378"/>
        <dbReference type="ChEBI" id="CHEBI:43474"/>
        <dbReference type="ChEBI" id="CHEBI:57945"/>
        <dbReference type="ChEBI" id="CHEBI:64074"/>
        <dbReference type="ChEBI" id="CHEBI:456215"/>
        <dbReference type="ChEBI" id="CHEBI:456216"/>
        <dbReference type="EC" id="4.2.1.136"/>
    </reaction>
</comment>
<comment type="catalytic activity">
    <reaction evidence="1">
        <text>(6S)-NADPHX + ADP = AMP + phosphate + NADPH + H(+)</text>
        <dbReference type="Rhea" id="RHEA:32235"/>
        <dbReference type="ChEBI" id="CHEBI:15378"/>
        <dbReference type="ChEBI" id="CHEBI:43474"/>
        <dbReference type="ChEBI" id="CHEBI:57783"/>
        <dbReference type="ChEBI" id="CHEBI:64076"/>
        <dbReference type="ChEBI" id="CHEBI:456215"/>
        <dbReference type="ChEBI" id="CHEBI:456216"/>
        <dbReference type="EC" id="4.2.1.136"/>
    </reaction>
</comment>
<comment type="cofactor">
    <cofactor evidence="1">
        <name>Mg(2+)</name>
        <dbReference type="ChEBI" id="CHEBI:18420"/>
    </cofactor>
</comment>
<comment type="subunit">
    <text evidence="1">Homotetramer.</text>
</comment>
<comment type="similarity">
    <text evidence="1">Belongs to the NnrD/CARKD family.</text>
</comment>
<name>NNRD_LACLA</name>
<keyword id="KW-0067">ATP-binding</keyword>
<keyword id="KW-0456">Lyase</keyword>
<keyword id="KW-0520">NAD</keyword>
<keyword id="KW-0521">NADP</keyword>
<keyword id="KW-0547">Nucleotide-binding</keyword>
<keyword id="KW-1185">Reference proteome</keyword>
<gene>
    <name evidence="1" type="primary">nnrD</name>
    <name type="ordered locus">LL0259</name>
    <name type="ORF">L57608</name>
</gene>
<evidence type="ECO:0000255" key="1">
    <source>
        <dbReference type="HAMAP-Rule" id="MF_01965"/>
    </source>
</evidence>